<gene>
    <name evidence="1" type="primary">purL</name>
    <name type="ordered locus">BRADO2785</name>
</gene>
<evidence type="ECO:0000255" key="1">
    <source>
        <dbReference type="HAMAP-Rule" id="MF_00420"/>
    </source>
</evidence>
<sequence>MRNEPQITPELVAAHGLKPDEYERILKLIGREPTFTELGIFSAMWNEHCSYKSSRIHLKGLPTKAPWVIQGPGENAGVIDIGDGQAVVFKMESHNHPSYIEPYQGATTGVGGILRDVFTMGARPIACLNALSFGAPEHPKTRHLVSGVVAGIGGYGNSFGVPTVGGQTRFHTRYDGNILVNAMAVGLADADKIFYAAASGVNMPIVYLGSKTGRDGIHGASMASAEFDDSSEEKRPTVQVGDPFAEKLLLEACLEIMAADCVIAIQDMGAAGLTCSAVEMGAKGDLGVDLDLDSVPTRETGMSAYEMMLSESQERMLMVLKPEKEKEAEAIFRKWGLDFAVVGYTTPSKRFVVKHGGDVMADLPIKELGDEAPLYDRPHVASPALPVIHAREVKAPMAIIPALEKLIATPDLCSKRWIWEQYDHVILGNTVQRPGGDAAVVRVQDGPKGLALTVDVTPRYCEADPFEGGKQAVAEAWRNITAVGGRPLAITDNLNFGNPERPEIMGQFVGCLKGISEACRALDFPVVSGNVSLYNETNGRAILPTPSIGGVGLLDDFTKSASIAFKTEGEAILLIGETHGWLGQSVYLRDVCGREEGAPPPVDLAAEKRIGDVVRGMIHAGTATAAHDLSDGGLLVALAEMAMASGIGARLLAAPASIVPHAYWFGEDQARYLVTVPETEAGRVLAKMRGANVPCTRIGTTGGTALAIAGEASVEVATLRTRFESWLPGYMGGAAA</sequence>
<comment type="function">
    <text evidence="1">Part of the phosphoribosylformylglycinamidine synthase complex involved in the purines biosynthetic pathway. Catalyzes the ATP-dependent conversion of formylglycinamide ribonucleotide (FGAR) and glutamine to yield formylglycinamidine ribonucleotide (FGAM) and glutamate. The FGAM synthase complex is composed of three subunits. PurQ produces an ammonia molecule by converting glutamine to glutamate. PurL transfers the ammonia molecule to FGAR to form FGAM in an ATP-dependent manner. PurS interacts with PurQ and PurL and is thought to assist in the transfer of the ammonia molecule from PurQ to PurL.</text>
</comment>
<comment type="catalytic activity">
    <reaction evidence="1">
        <text>N(2)-formyl-N(1)-(5-phospho-beta-D-ribosyl)glycinamide + L-glutamine + ATP + H2O = 2-formamido-N(1)-(5-O-phospho-beta-D-ribosyl)acetamidine + L-glutamate + ADP + phosphate + H(+)</text>
        <dbReference type="Rhea" id="RHEA:17129"/>
        <dbReference type="ChEBI" id="CHEBI:15377"/>
        <dbReference type="ChEBI" id="CHEBI:15378"/>
        <dbReference type="ChEBI" id="CHEBI:29985"/>
        <dbReference type="ChEBI" id="CHEBI:30616"/>
        <dbReference type="ChEBI" id="CHEBI:43474"/>
        <dbReference type="ChEBI" id="CHEBI:58359"/>
        <dbReference type="ChEBI" id="CHEBI:147286"/>
        <dbReference type="ChEBI" id="CHEBI:147287"/>
        <dbReference type="ChEBI" id="CHEBI:456216"/>
        <dbReference type="EC" id="6.3.5.3"/>
    </reaction>
</comment>
<comment type="pathway">
    <text evidence="1">Purine metabolism; IMP biosynthesis via de novo pathway; 5-amino-1-(5-phospho-D-ribosyl)imidazole from N(2)-formyl-N(1)-(5-phospho-D-ribosyl)glycinamide: step 1/2.</text>
</comment>
<comment type="subunit">
    <text evidence="1">Monomer. Part of the FGAM synthase complex composed of 1 PurL, 1 PurQ and 2 PurS subunits.</text>
</comment>
<comment type="subcellular location">
    <subcellularLocation>
        <location evidence="1">Cytoplasm</location>
    </subcellularLocation>
</comment>
<comment type="similarity">
    <text evidence="1">Belongs to the FGAMS family.</text>
</comment>
<keyword id="KW-0067">ATP-binding</keyword>
<keyword id="KW-0963">Cytoplasm</keyword>
<keyword id="KW-0436">Ligase</keyword>
<keyword id="KW-0460">Magnesium</keyword>
<keyword id="KW-0479">Metal-binding</keyword>
<keyword id="KW-0547">Nucleotide-binding</keyword>
<keyword id="KW-0658">Purine biosynthesis</keyword>
<keyword id="KW-1185">Reference proteome</keyword>
<dbReference type="EC" id="6.3.5.3" evidence="1"/>
<dbReference type="EMBL" id="CU234118">
    <property type="protein sequence ID" value="CAL76595.1"/>
    <property type="molecule type" value="Genomic_DNA"/>
</dbReference>
<dbReference type="RefSeq" id="WP_011925799.1">
    <property type="nucleotide sequence ID" value="NC_009445.1"/>
</dbReference>
<dbReference type="SMR" id="A4YRR9"/>
<dbReference type="STRING" id="114615.BRADO2785"/>
<dbReference type="KEGG" id="bra:BRADO2785"/>
<dbReference type="eggNOG" id="COG0046">
    <property type="taxonomic scope" value="Bacteria"/>
</dbReference>
<dbReference type="HOGENOM" id="CLU_003100_0_1_5"/>
<dbReference type="OrthoDB" id="9804441at2"/>
<dbReference type="UniPathway" id="UPA00074">
    <property type="reaction ID" value="UER00128"/>
</dbReference>
<dbReference type="Proteomes" id="UP000001994">
    <property type="component" value="Chromosome"/>
</dbReference>
<dbReference type="GO" id="GO:0005737">
    <property type="term" value="C:cytoplasm"/>
    <property type="evidence" value="ECO:0007669"/>
    <property type="project" value="UniProtKB-SubCell"/>
</dbReference>
<dbReference type="GO" id="GO:0005524">
    <property type="term" value="F:ATP binding"/>
    <property type="evidence" value="ECO:0007669"/>
    <property type="project" value="UniProtKB-UniRule"/>
</dbReference>
<dbReference type="GO" id="GO:0000287">
    <property type="term" value="F:magnesium ion binding"/>
    <property type="evidence" value="ECO:0007669"/>
    <property type="project" value="UniProtKB-UniRule"/>
</dbReference>
<dbReference type="GO" id="GO:0004642">
    <property type="term" value="F:phosphoribosylformylglycinamidine synthase activity"/>
    <property type="evidence" value="ECO:0007669"/>
    <property type="project" value="UniProtKB-UniRule"/>
</dbReference>
<dbReference type="GO" id="GO:0006189">
    <property type="term" value="P:'de novo' IMP biosynthetic process"/>
    <property type="evidence" value="ECO:0007669"/>
    <property type="project" value="UniProtKB-UniRule"/>
</dbReference>
<dbReference type="CDD" id="cd02203">
    <property type="entry name" value="PurL_repeat1"/>
    <property type="match status" value="1"/>
</dbReference>
<dbReference type="CDD" id="cd02204">
    <property type="entry name" value="PurL_repeat2"/>
    <property type="match status" value="1"/>
</dbReference>
<dbReference type="FunFam" id="3.30.1330.10:FF:000004">
    <property type="entry name" value="Phosphoribosylformylglycinamidine synthase subunit PurL"/>
    <property type="match status" value="1"/>
</dbReference>
<dbReference type="Gene3D" id="3.90.650.10">
    <property type="entry name" value="PurM-like C-terminal domain"/>
    <property type="match status" value="2"/>
</dbReference>
<dbReference type="Gene3D" id="3.30.1330.10">
    <property type="entry name" value="PurM-like, N-terminal domain"/>
    <property type="match status" value="2"/>
</dbReference>
<dbReference type="HAMAP" id="MF_00420">
    <property type="entry name" value="PurL_2"/>
    <property type="match status" value="1"/>
</dbReference>
<dbReference type="InterPro" id="IPR010074">
    <property type="entry name" value="PRibForGlyAmidine_synth_PurL"/>
</dbReference>
<dbReference type="InterPro" id="IPR041609">
    <property type="entry name" value="PurL_linker"/>
</dbReference>
<dbReference type="InterPro" id="IPR010918">
    <property type="entry name" value="PurM-like_C_dom"/>
</dbReference>
<dbReference type="InterPro" id="IPR036676">
    <property type="entry name" value="PurM-like_C_sf"/>
</dbReference>
<dbReference type="InterPro" id="IPR016188">
    <property type="entry name" value="PurM-like_N"/>
</dbReference>
<dbReference type="InterPro" id="IPR036921">
    <property type="entry name" value="PurM-like_N_sf"/>
</dbReference>
<dbReference type="NCBIfam" id="TIGR01736">
    <property type="entry name" value="FGAM_synth_II"/>
    <property type="match status" value="1"/>
</dbReference>
<dbReference type="NCBIfam" id="NF002290">
    <property type="entry name" value="PRK01213.1"/>
    <property type="match status" value="1"/>
</dbReference>
<dbReference type="PANTHER" id="PTHR43555">
    <property type="entry name" value="PHOSPHORIBOSYLFORMYLGLYCINAMIDINE SYNTHASE SUBUNIT PURL"/>
    <property type="match status" value="1"/>
</dbReference>
<dbReference type="PANTHER" id="PTHR43555:SF1">
    <property type="entry name" value="PHOSPHORIBOSYLFORMYLGLYCINAMIDINE SYNTHASE SUBUNIT PURL"/>
    <property type="match status" value="1"/>
</dbReference>
<dbReference type="Pfam" id="PF00586">
    <property type="entry name" value="AIRS"/>
    <property type="match status" value="2"/>
</dbReference>
<dbReference type="Pfam" id="PF02769">
    <property type="entry name" value="AIRS_C"/>
    <property type="match status" value="2"/>
</dbReference>
<dbReference type="Pfam" id="PF18072">
    <property type="entry name" value="FGAR-AT_linker"/>
    <property type="match status" value="1"/>
</dbReference>
<dbReference type="PIRSF" id="PIRSF001587">
    <property type="entry name" value="FGAM_synthase_II"/>
    <property type="match status" value="1"/>
</dbReference>
<dbReference type="SUPFAM" id="SSF56042">
    <property type="entry name" value="PurM C-terminal domain-like"/>
    <property type="match status" value="2"/>
</dbReference>
<dbReference type="SUPFAM" id="SSF55326">
    <property type="entry name" value="PurM N-terminal domain-like"/>
    <property type="match status" value="2"/>
</dbReference>
<reference key="1">
    <citation type="journal article" date="2007" name="Science">
        <title>Legumes symbioses: absence of nod genes in photosynthetic bradyrhizobia.</title>
        <authorList>
            <person name="Giraud E."/>
            <person name="Moulin L."/>
            <person name="Vallenet D."/>
            <person name="Barbe V."/>
            <person name="Cytryn E."/>
            <person name="Avarre J.-C."/>
            <person name="Jaubert M."/>
            <person name="Simon D."/>
            <person name="Cartieaux F."/>
            <person name="Prin Y."/>
            <person name="Bena G."/>
            <person name="Hannibal L."/>
            <person name="Fardoux J."/>
            <person name="Kojadinovic M."/>
            <person name="Vuillet L."/>
            <person name="Lajus A."/>
            <person name="Cruveiller S."/>
            <person name="Rouy Z."/>
            <person name="Mangenot S."/>
            <person name="Segurens B."/>
            <person name="Dossat C."/>
            <person name="Franck W.L."/>
            <person name="Chang W.-S."/>
            <person name="Saunders E."/>
            <person name="Bruce D."/>
            <person name="Richardson P."/>
            <person name="Normand P."/>
            <person name="Dreyfus B."/>
            <person name="Pignol D."/>
            <person name="Stacey G."/>
            <person name="Emerich D."/>
            <person name="Vermeglio A."/>
            <person name="Medigue C."/>
            <person name="Sadowsky M."/>
        </authorList>
    </citation>
    <scope>NUCLEOTIDE SEQUENCE [LARGE SCALE GENOMIC DNA]</scope>
    <source>
        <strain>ORS 278</strain>
    </source>
</reference>
<organism>
    <name type="scientific">Bradyrhizobium sp. (strain ORS 278)</name>
    <dbReference type="NCBI Taxonomy" id="114615"/>
    <lineage>
        <taxon>Bacteria</taxon>
        <taxon>Pseudomonadati</taxon>
        <taxon>Pseudomonadota</taxon>
        <taxon>Alphaproteobacteria</taxon>
        <taxon>Hyphomicrobiales</taxon>
        <taxon>Nitrobacteraceae</taxon>
        <taxon>Bradyrhizobium</taxon>
    </lineage>
</organism>
<proteinExistence type="inferred from homology"/>
<feature type="chain" id="PRO_1000050300" description="Phosphoribosylformylglycinamidine synthase subunit PurL">
    <location>
        <begin position="1"/>
        <end position="736"/>
    </location>
</feature>
<feature type="active site" evidence="1">
    <location>
        <position position="48"/>
    </location>
</feature>
<feature type="active site" description="Proton acceptor" evidence="1">
    <location>
        <position position="94"/>
    </location>
</feature>
<feature type="binding site" evidence="1">
    <location>
        <position position="51"/>
    </location>
    <ligand>
        <name>ATP</name>
        <dbReference type="ChEBI" id="CHEBI:30616"/>
    </ligand>
</feature>
<feature type="binding site" evidence="1">
    <location>
        <position position="90"/>
    </location>
    <ligand>
        <name>ATP</name>
        <dbReference type="ChEBI" id="CHEBI:30616"/>
    </ligand>
</feature>
<feature type="binding site" evidence="1">
    <location>
        <position position="92"/>
    </location>
    <ligand>
        <name>Mg(2+)</name>
        <dbReference type="ChEBI" id="CHEBI:18420"/>
        <label>1</label>
    </ligand>
</feature>
<feature type="binding site" evidence="1">
    <location>
        <begin position="93"/>
        <end position="96"/>
    </location>
    <ligand>
        <name>substrate</name>
    </ligand>
</feature>
<feature type="binding site" evidence="1">
    <location>
        <position position="115"/>
    </location>
    <ligand>
        <name>substrate</name>
    </ligand>
</feature>
<feature type="binding site" evidence="1">
    <location>
        <position position="116"/>
    </location>
    <ligand>
        <name>Mg(2+)</name>
        <dbReference type="ChEBI" id="CHEBI:18420"/>
        <label>2</label>
    </ligand>
</feature>
<feature type="binding site" evidence="1">
    <location>
        <position position="239"/>
    </location>
    <ligand>
        <name>substrate</name>
    </ligand>
</feature>
<feature type="binding site" evidence="1">
    <location>
        <position position="267"/>
    </location>
    <ligand>
        <name>Mg(2+)</name>
        <dbReference type="ChEBI" id="CHEBI:18420"/>
        <label>2</label>
    </ligand>
</feature>
<feature type="binding site" evidence="1">
    <location>
        <begin position="311"/>
        <end position="313"/>
    </location>
    <ligand>
        <name>substrate</name>
    </ligand>
</feature>
<feature type="binding site" evidence="1">
    <location>
        <position position="492"/>
    </location>
    <ligand>
        <name>ATP</name>
        <dbReference type="ChEBI" id="CHEBI:30616"/>
    </ligand>
</feature>
<feature type="binding site" evidence="1">
    <location>
        <position position="529"/>
    </location>
    <ligand>
        <name>ATP</name>
        <dbReference type="ChEBI" id="CHEBI:30616"/>
    </ligand>
</feature>
<feature type="binding site" evidence="1">
    <location>
        <position position="530"/>
    </location>
    <ligand>
        <name>Mg(2+)</name>
        <dbReference type="ChEBI" id="CHEBI:18420"/>
        <label>1</label>
    </ligand>
</feature>
<feature type="binding site" evidence="1">
    <location>
        <position position="532"/>
    </location>
    <ligand>
        <name>substrate</name>
    </ligand>
</feature>
<protein>
    <recommendedName>
        <fullName evidence="1">Phosphoribosylformylglycinamidine synthase subunit PurL</fullName>
        <shortName evidence="1">FGAM synthase</shortName>
        <ecNumber evidence="1">6.3.5.3</ecNumber>
    </recommendedName>
    <alternativeName>
        <fullName evidence="1">Formylglycinamide ribonucleotide amidotransferase subunit II</fullName>
        <shortName evidence="1">FGAR amidotransferase II</shortName>
        <shortName evidence="1">FGAR-AT II</shortName>
    </alternativeName>
    <alternativeName>
        <fullName evidence="1">Glutamine amidotransferase PurL</fullName>
    </alternativeName>
    <alternativeName>
        <fullName evidence="1">Phosphoribosylformylglycinamidine synthase subunit II</fullName>
    </alternativeName>
</protein>
<accession>A4YRR9</accession>
<name>PURL_BRASO</name>